<proteinExistence type="inferred from homology"/>
<comment type="function">
    <text evidence="1">Transfers and isomerizes the ribose moiety from AdoMet to the 7-aminomethyl group of 7-deazaguanine (preQ1-tRNA) to give epoxyqueuosine (oQ-tRNA).</text>
</comment>
<comment type="catalytic activity">
    <reaction evidence="1">
        <text>7-aminomethyl-7-carbaguanosine(34) in tRNA + S-adenosyl-L-methionine = epoxyqueuosine(34) in tRNA + adenine + L-methionine + 2 H(+)</text>
        <dbReference type="Rhea" id="RHEA:32155"/>
        <dbReference type="Rhea" id="RHEA-COMP:10342"/>
        <dbReference type="Rhea" id="RHEA-COMP:18582"/>
        <dbReference type="ChEBI" id="CHEBI:15378"/>
        <dbReference type="ChEBI" id="CHEBI:16708"/>
        <dbReference type="ChEBI" id="CHEBI:57844"/>
        <dbReference type="ChEBI" id="CHEBI:59789"/>
        <dbReference type="ChEBI" id="CHEBI:82833"/>
        <dbReference type="ChEBI" id="CHEBI:194443"/>
        <dbReference type="EC" id="2.4.99.17"/>
    </reaction>
</comment>
<comment type="pathway">
    <text evidence="1">tRNA modification; tRNA-queuosine biosynthesis.</text>
</comment>
<comment type="subunit">
    <text evidence="1">Monomer.</text>
</comment>
<comment type="subcellular location">
    <subcellularLocation>
        <location evidence="1">Cytoplasm</location>
    </subcellularLocation>
</comment>
<comment type="similarity">
    <text evidence="1">Belongs to the QueA family.</text>
</comment>
<dbReference type="EC" id="2.4.99.17" evidence="1"/>
<dbReference type="EMBL" id="CP000302">
    <property type="protein sequence ID" value="ABE54686.1"/>
    <property type="molecule type" value="Genomic_DNA"/>
</dbReference>
<dbReference type="RefSeq" id="WP_011495844.1">
    <property type="nucleotide sequence ID" value="NC_007954.1"/>
</dbReference>
<dbReference type="SMR" id="Q12PE0"/>
<dbReference type="STRING" id="318161.Sden_1400"/>
<dbReference type="KEGG" id="sdn:Sden_1400"/>
<dbReference type="eggNOG" id="COG0809">
    <property type="taxonomic scope" value="Bacteria"/>
</dbReference>
<dbReference type="HOGENOM" id="CLU_039110_1_0_6"/>
<dbReference type="OrthoDB" id="9805933at2"/>
<dbReference type="UniPathway" id="UPA00392"/>
<dbReference type="Proteomes" id="UP000001982">
    <property type="component" value="Chromosome"/>
</dbReference>
<dbReference type="GO" id="GO:0005737">
    <property type="term" value="C:cytoplasm"/>
    <property type="evidence" value="ECO:0007669"/>
    <property type="project" value="UniProtKB-SubCell"/>
</dbReference>
<dbReference type="GO" id="GO:0051075">
    <property type="term" value="F:S-adenosylmethionine:tRNA ribosyltransferase-isomerase activity"/>
    <property type="evidence" value="ECO:0007669"/>
    <property type="project" value="UniProtKB-EC"/>
</dbReference>
<dbReference type="GO" id="GO:0008616">
    <property type="term" value="P:queuosine biosynthetic process"/>
    <property type="evidence" value="ECO:0007669"/>
    <property type="project" value="UniProtKB-UniRule"/>
</dbReference>
<dbReference type="GO" id="GO:0002099">
    <property type="term" value="P:tRNA wobble guanine modification"/>
    <property type="evidence" value="ECO:0007669"/>
    <property type="project" value="TreeGrafter"/>
</dbReference>
<dbReference type="FunFam" id="2.40.10.240:FF:000001">
    <property type="entry name" value="S-adenosylmethionine:tRNA ribosyltransferase-isomerase"/>
    <property type="match status" value="1"/>
</dbReference>
<dbReference type="FunFam" id="3.40.1780.10:FF:000001">
    <property type="entry name" value="S-adenosylmethionine:tRNA ribosyltransferase-isomerase"/>
    <property type="match status" value="1"/>
</dbReference>
<dbReference type="Gene3D" id="2.40.10.240">
    <property type="entry name" value="QueA-like"/>
    <property type="match status" value="1"/>
</dbReference>
<dbReference type="Gene3D" id="3.40.1780.10">
    <property type="entry name" value="QueA-like"/>
    <property type="match status" value="1"/>
</dbReference>
<dbReference type="HAMAP" id="MF_00113">
    <property type="entry name" value="QueA"/>
    <property type="match status" value="1"/>
</dbReference>
<dbReference type="InterPro" id="IPR003699">
    <property type="entry name" value="QueA"/>
</dbReference>
<dbReference type="InterPro" id="IPR042118">
    <property type="entry name" value="QueA_dom1"/>
</dbReference>
<dbReference type="InterPro" id="IPR042119">
    <property type="entry name" value="QueA_dom2"/>
</dbReference>
<dbReference type="InterPro" id="IPR036100">
    <property type="entry name" value="QueA_sf"/>
</dbReference>
<dbReference type="NCBIfam" id="NF001140">
    <property type="entry name" value="PRK00147.1"/>
    <property type="match status" value="1"/>
</dbReference>
<dbReference type="NCBIfam" id="TIGR00113">
    <property type="entry name" value="queA"/>
    <property type="match status" value="1"/>
</dbReference>
<dbReference type="PANTHER" id="PTHR30307">
    <property type="entry name" value="S-ADENOSYLMETHIONINE:TRNA RIBOSYLTRANSFERASE-ISOMERASE"/>
    <property type="match status" value="1"/>
</dbReference>
<dbReference type="PANTHER" id="PTHR30307:SF0">
    <property type="entry name" value="S-ADENOSYLMETHIONINE:TRNA RIBOSYLTRANSFERASE-ISOMERASE"/>
    <property type="match status" value="1"/>
</dbReference>
<dbReference type="Pfam" id="PF02547">
    <property type="entry name" value="Queuosine_synth"/>
    <property type="match status" value="1"/>
</dbReference>
<dbReference type="SUPFAM" id="SSF111337">
    <property type="entry name" value="QueA-like"/>
    <property type="match status" value="1"/>
</dbReference>
<reference key="1">
    <citation type="submission" date="2006-03" db="EMBL/GenBank/DDBJ databases">
        <title>Complete sequence of Shewanella denitrificans OS217.</title>
        <authorList>
            <consortium name="US DOE Joint Genome Institute"/>
            <person name="Copeland A."/>
            <person name="Lucas S."/>
            <person name="Lapidus A."/>
            <person name="Barry K."/>
            <person name="Detter J.C."/>
            <person name="Glavina del Rio T."/>
            <person name="Hammon N."/>
            <person name="Israni S."/>
            <person name="Dalin E."/>
            <person name="Tice H."/>
            <person name="Pitluck S."/>
            <person name="Brettin T."/>
            <person name="Bruce D."/>
            <person name="Han C."/>
            <person name="Tapia R."/>
            <person name="Gilna P."/>
            <person name="Kiss H."/>
            <person name="Schmutz J."/>
            <person name="Larimer F."/>
            <person name="Land M."/>
            <person name="Hauser L."/>
            <person name="Kyrpides N."/>
            <person name="Lykidis A."/>
            <person name="Richardson P."/>
        </authorList>
    </citation>
    <scope>NUCLEOTIDE SEQUENCE [LARGE SCALE GENOMIC DNA]</scope>
    <source>
        <strain>OS217 / ATCC BAA-1090 / DSM 15013</strain>
    </source>
</reference>
<gene>
    <name evidence="1" type="primary">queA</name>
    <name type="ordered locus">Sden_1400</name>
</gene>
<protein>
    <recommendedName>
        <fullName evidence="1">S-adenosylmethionine:tRNA ribosyltransferase-isomerase</fullName>
        <ecNumber evidence="1">2.4.99.17</ecNumber>
    </recommendedName>
    <alternativeName>
        <fullName evidence="1">Queuosine biosynthesis protein QueA</fullName>
    </alternativeName>
</protein>
<organism>
    <name type="scientific">Shewanella denitrificans (strain OS217 / ATCC BAA-1090 / DSM 15013)</name>
    <dbReference type="NCBI Taxonomy" id="318161"/>
    <lineage>
        <taxon>Bacteria</taxon>
        <taxon>Pseudomonadati</taxon>
        <taxon>Pseudomonadota</taxon>
        <taxon>Gammaproteobacteria</taxon>
        <taxon>Alteromonadales</taxon>
        <taxon>Shewanellaceae</taxon>
        <taxon>Shewanella</taxon>
    </lineage>
</organism>
<feature type="chain" id="PRO_1000015270" description="S-adenosylmethionine:tRNA ribosyltransferase-isomerase">
    <location>
        <begin position="1"/>
        <end position="346"/>
    </location>
</feature>
<sequence length="346" mass="38429">MRVADFSFDLPDELIARYPTAQRNASRLLTLDGPTGALADKQFTDLFEMINPGDLMVFNNTRVIPARLFGQKATGGKLEILVERMLDDKRILAHVRSSKSPKVDTLINLDGEHQMKMIARHDALFELELLSELTILEVLEQVGHMPLPPYIDRPDEDADKERYQTVYNKTPGAVAAPTAGLHFDDAMLSALKHKGVNIAFVTLHVGAGTFQPVRVDNVLEHKMHSEWADVPQDVVDLIAQTKAAGNRVIAVGTTSVRSLESAAKACGDKPLATFSGDTDIFIYPGYEFKVVDAMVTNFHLPESTLIMLISAFTGVDEVRYAYQHAIAQKYRFFSYGDAMFLTKKAQ</sequence>
<name>QUEA_SHEDO</name>
<evidence type="ECO:0000255" key="1">
    <source>
        <dbReference type="HAMAP-Rule" id="MF_00113"/>
    </source>
</evidence>
<keyword id="KW-0963">Cytoplasm</keyword>
<keyword id="KW-0671">Queuosine biosynthesis</keyword>
<keyword id="KW-1185">Reference proteome</keyword>
<keyword id="KW-0949">S-adenosyl-L-methionine</keyword>
<keyword id="KW-0808">Transferase</keyword>
<accession>Q12PE0</accession>